<protein>
    <recommendedName>
        <fullName evidence="1">Orotidine 5'-phosphate decarboxylase</fullName>
        <ecNumber evidence="1">4.1.1.23</ecNumber>
    </recommendedName>
    <alternativeName>
        <fullName evidence="1">OMP decarboxylase</fullName>
        <shortName evidence="1">OMPDCase</shortName>
        <shortName evidence="1">OMPdecase</shortName>
    </alternativeName>
</protein>
<organism>
    <name type="scientific">Clostridium botulinum (strain ATCC 19397 / Type A)</name>
    <dbReference type="NCBI Taxonomy" id="441770"/>
    <lineage>
        <taxon>Bacteria</taxon>
        <taxon>Bacillati</taxon>
        <taxon>Bacillota</taxon>
        <taxon>Clostridia</taxon>
        <taxon>Eubacteriales</taxon>
        <taxon>Clostridiaceae</taxon>
        <taxon>Clostridium</taxon>
    </lineage>
</organism>
<comment type="catalytic activity">
    <reaction evidence="1">
        <text>orotidine 5'-phosphate + H(+) = UMP + CO2</text>
        <dbReference type="Rhea" id="RHEA:11596"/>
        <dbReference type="ChEBI" id="CHEBI:15378"/>
        <dbReference type="ChEBI" id="CHEBI:16526"/>
        <dbReference type="ChEBI" id="CHEBI:57538"/>
        <dbReference type="ChEBI" id="CHEBI:57865"/>
        <dbReference type="EC" id="4.1.1.23"/>
    </reaction>
</comment>
<comment type="pathway">
    <text evidence="1">Pyrimidine metabolism; UMP biosynthesis via de novo pathway; UMP from orotate: step 2/2.</text>
</comment>
<comment type="similarity">
    <text evidence="1">Belongs to the OMP decarboxylase family. Type 2 subfamily.</text>
</comment>
<evidence type="ECO:0000255" key="1">
    <source>
        <dbReference type="HAMAP-Rule" id="MF_01215"/>
    </source>
</evidence>
<reference key="1">
    <citation type="journal article" date="2007" name="PLoS ONE">
        <title>Analysis of the neurotoxin complex genes in Clostridium botulinum A1-A4 and B1 strains: BoNT/A3, /Ba4 and /B1 clusters are located within plasmids.</title>
        <authorList>
            <person name="Smith T.J."/>
            <person name="Hill K.K."/>
            <person name="Foley B.T."/>
            <person name="Detter J.C."/>
            <person name="Munk A.C."/>
            <person name="Bruce D.C."/>
            <person name="Doggett N.A."/>
            <person name="Smith L.A."/>
            <person name="Marks J.D."/>
            <person name="Xie G."/>
            <person name="Brettin T.S."/>
        </authorList>
    </citation>
    <scope>NUCLEOTIDE SEQUENCE [LARGE SCALE GENOMIC DNA]</scope>
    <source>
        <strain>ATCC 19397 / Type A</strain>
    </source>
</reference>
<gene>
    <name evidence="1" type="primary">pyrF</name>
    <name type="ordered locus">CLB_3275</name>
</gene>
<dbReference type="EC" id="4.1.1.23" evidence="1"/>
<dbReference type="EMBL" id="CP000726">
    <property type="protein sequence ID" value="ABS33038.1"/>
    <property type="molecule type" value="Genomic_DNA"/>
</dbReference>
<dbReference type="RefSeq" id="WP_003361662.1">
    <property type="nucleotide sequence ID" value="NC_009697.1"/>
</dbReference>
<dbReference type="SMR" id="A7FYI9"/>
<dbReference type="GeneID" id="5187132"/>
<dbReference type="KEGG" id="cba:CLB_3275"/>
<dbReference type="HOGENOM" id="CLU_060704_1_1_9"/>
<dbReference type="UniPathway" id="UPA00070">
    <property type="reaction ID" value="UER00120"/>
</dbReference>
<dbReference type="GO" id="GO:0004590">
    <property type="term" value="F:orotidine-5'-phosphate decarboxylase activity"/>
    <property type="evidence" value="ECO:0007669"/>
    <property type="project" value="UniProtKB-UniRule"/>
</dbReference>
<dbReference type="GO" id="GO:0006207">
    <property type="term" value="P:'de novo' pyrimidine nucleobase biosynthetic process"/>
    <property type="evidence" value="ECO:0007669"/>
    <property type="project" value="InterPro"/>
</dbReference>
<dbReference type="GO" id="GO:0044205">
    <property type="term" value="P:'de novo' UMP biosynthetic process"/>
    <property type="evidence" value="ECO:0007669"/>
    <property type="project" value="UniProtKB-UniRule"/>
</dbReference>
<dbReference type="CDD" id="cd04725">
    <property type="entry name" value="OMP_decarboxylase_like"/>
    <property type="match status" value="1"/>
</dbReference>
<dbReference type="FunFam" id="3.20.20.70:FF:000246">
    <property type="entry name" value="Orotidine 5'-phosphate decarboxylase"/>
    <property type="match status" value="1"/>
</dbReference>
<dbReference type="Gene3D" id="3.20.20.70">
    <property type="entry name" value="Aldolase class I"/>
    <property type="match status" value="1"/>
</dbReference>
<dbReference type="HAMAP" id="MF_01215">
    <property type="entry name" value="OMPdecase_type2"/>
    <property type="match status" value="1"/>
</dbReference>
<dbReference type="InterPro" id="IPR013785">
    <property type="entry name" value="Aldolase_TIM"/>
</dbReference>
<dbReference type="InterPro" id="IPR011995">
    <property type="entry name" value="OMPdecase_type-2"/>
</dbReference>
<dbReference type="InterPro" id="IPR001754">
    <property type="entry name" value="OMPdeCOase_dom"/>
</dbReference>
<dbReference type="InterPro" id="IPR011060">
    <property type="entry name" value="RibuloseP-bd_barrel"/>
</dbReference>
<dbReference type="NCBIfam" id="TIGR02127">
    <property type="entry name" value="pyrF_sub2"/>
    <property type="match status" value="1"/>
</dbReference>
<dbReference type="PANTHER" id="PTHR43375">
    <property type="entry name" value="OROTIDINE 5'-PHOSPHATE DECARBOXYLASE"/>
    <property type="match status" value="1"/>
</dbReference>
<dbReference type="PANTHER" id="PTHR43375:SF1">
    <property type="entry name" value="OROTIDINE 5'-PHOSPHATE DECARBOXYLASE"/>
    <property type="match status" value="1"/>
</dbReference>
<dbReference type="Pfam" id="PF00215">
    <property type="entry name" value="OMPdecase"/>
    <property type="match status" value="1"/>
</dbReference>
<dbReference type="SMART" id="SM00934">
    <property type="entry name" value="OMPdecase"/>
    <property type="match status" value="1"/>
</dbReference>
<dbReference type="SUPFAM" id="SSF51366">
    <property type="entry name" value="Ribulose-phoshate binding barrel"/>
    <property type="match status" value="1"/>
</dbReference>
<sequence>MIIDKLYENVEKKGCVCVGLDTDISYLPKGFLNKFTNIEDAIFAFNQRIVDSTFDVSACYKVQIAYYEAMGIKGMILYKKTLEYIRKKGGIVIADIKRGDISATAKMYAKAHFEGDFESDFITLNPYMGMDTLEPYKDYFKNKEKGVFLLLRTSNEGSKDIQYLDLKDNKKVYNKVGEKIENIGKEFLGNCGYSSIGAVVGCTAEENNIRKELKHTFFLIPGYGAQGGKAEVAKSYLSGGNGGIVNSSRGILLAYKKYDEEGKNFEECARNEVINMKKTLQII</sequence>
<name>PYRF_CLOB1</name>
<proteinExistence type="inferred from homology"/>
<accession>A7FYI9</accession>
<keyword id="KW-0210">Decarboxylase</keyword>
<keyword id="KW-0456">Lyase</keyword>
<keyword id="KW-0665">Pyrimidine biosynthesis</keyword>
<feature type="chain" id="PRO_1000066461" description="Orotidine 5'-phosphate decarboxylase">
    <location>
        <begin position="1"/>
        <end position="283"/>
    </location>
</feature>
<feature type="active site" description="Proton donor" evidence="1">
    <location>
        <position position="97"/>
    </location>
</feature>